<sequence length="259" mass="29015">MLHIIENLLDTAQLSQLTSILTHQHAQWQDGKLTAGISAQQQKNNWQLSRQDPSYQAMANLCLEALQQHPVFMSAALPKVIMPPLFSAYQLGQGYGMHVDNALQTHPDSKQLMRTDLSLTLFLNNPADYEGGELVISDEYGEHSIKLSAGDAVLYPSTSLHRVNTVTSGQRLAMVTWVQSLVRSDEQRQILHDLDVSHILLRQKLLATSDQAQSTQAQSTQAQCGQLSEQHSTDQQLTHQAIEKLNQSYHNLLRLWAES</sequence>
<comment type="cofactor">
    <cofactor evidence="1">
        <name>Fe(2+)</name>
        <dbReference type="ChEBI" id="CHEBI:29033"/>
    </cofactor>
    <text evidence="1">Binds 1 Fe(2+) ion per subunit.</text>
</comment>
<comment type="cofactor">
    <cofactor evidence="1">
        <name>L-ascorbate</name>
        <dbReference type="ChEBI" id="CHEBI:38290"/>
    </cofactor>
</comment>
<name>Y1523_PSYWF</name>
<proteinExistence type="inferred from homology"/>
<organism>
    <name type="scientific">Psychrobacter sp. (strain PRwf-1)</name>
    <dbReference type="NCBI Taxonomy" id="349106"/>
    <lineage>
        <taxon>Bacteria</taxon>
        <taxon>Pseudomonadati</taxon>
        <taxon>Pseudomonadota</taxon>
        <taxon>Gammaproteobacteria</taxon>
        <taxon>Moraxellales</taxon>
        <taxon>Moraxellaceae</taxon>
        <taxon>Psychrobacter</taxon>
    </lineage>
</organism>
<feature type="chain" id="PRO_0000346512" description="PKHD-type hydroxylase PsycPRwf_1523">
    <location>
        <begin position="1"/>
        <end position="259"/>
    </location>
</feature>
<feature type="domain" description="Fe2OG dioxygenase" evidence="1">
    <location>
        <begin position="80"/>
        <end position="180"/>
    </location>
</feature>
<feature type="binding site" evidence="1">
    <location>
        <position position="98"/>
    </location>
    <ligand>
        <name>Fe cation</name>
        <dbReference type="ChEBI" id="CHEBI:24875"/>
    </ligand>
</feature>
<feature type="binding site" evidence="1">
    <location>
        <position position="100"/>
    </location>
    <ligand>
        <name>Fe cation</name>
        <dbReference type="ChEBI" id="CHEBI:24875"/>
    </ligand>
</feature>
<feature type="binding site" evidence="1">
    <location>
        <position position="161"/>
    </location>
    <ligand>
        <name>Fe cation</name>
        <dbReference type="ChEBI" id="CHEBI:24875"/>
    </ligand>
</feature>
<feature type="binding site" evidence="1">
    <location>
        <position position="171"/>
    </location>
    <ligand>
        <name>2-oxoglutarate</name>
        <dbReference type="ChEBI" id="CHEBI:16810"/>
    </ligand>
</feature>
<keyword id="KW-0223">Dioxygenase</keyword>
<keyword id="KW-0408">Iron</keyword>
<keyword id="KW-0479">Metal-binding</keyword>
<keyword id="KW-0560">Oxidoreductase</keyword>
<keyword id="KW-0847">Vitamin C</keyword>
<protein>
    <recommendedName>
        <fullName evidence="1">PKHD-type hydroxylase PsycPRwf_1523</fullName>
        <ecNumber evidence="1">1.14.11.-</ecNumber>
    </recommendedName>
</protein>
<gene>
    <name type="ordered locus">PsycPRwf_1523</name>
</gene>
<dbReference type="EC" id="1.14.11.-" evidence="1"/>
<dbReference type="EMBL" id="CP000713">
    <property type="protein sequence ID" value="ABQ94464.1"/>
    <property type="molecule type" value="Genomic_DNA"/>
</dbReference>
<dbReference type="SMR" id="A5WFM3"/>
<dbReference type="STRING" id="349106.PsycPRwf_1523"/>
<dbReference type="KEGG" id="prw:PsycPRwf_1523"/>
<dbReference type="eggNOG" id="COG3128">
    <property type="taxonomic scope" value="Bacteria"/>
</dbReference>
<dbReference type="HOGENOM" id="CLU_106663_0_0_6"/>
<dbReference type="GO" id="GO:0016706">
    <property type="term" value="F:2-oxoglutarate-dependent dioxygenase activity"/>
    <property type="evidence" value="ECO:0007669"/>
    <property type="project" value="UniProtKB-UniRule"/>
</dbReference>
<dbReference type="GO" id="GO:0005506">
    <property type="term" value="F:iron ion binding"/>
    <property type="evidence" value="ECO:0007669"/>
    <property type="project" value="UniProtKB-UniRule"/>
</dbReference>
<dbReference type="GO" id="GO:0031418">
    <property type="term" value="F:L-ascorbic acid binding"/>
    <property type="evidence" value="ECO:0007669"/>
    <property type="project" value="UniProtKB-KW"/>
</dbReference>
<dbReference type="GO" id="GO:0006974">
    <property type="term" value="P:DNA damage response"/>
    <property type="evidence" value="ECO:0007669"/>
    <property type="project" value="TreeGrafter"/>
</dbReference>
<dbReference type="GO" id="GO:0006879">
    <property type="term" value="P:intracellular iron ion homeostasis"/>
    <property type="evidence" value="ECO:0007669"/>
    <property type="project" value="TreeGrafter"/>
</dbReference>
<dbReference type="Gene3D" id="2.60.120.620">
    <property type="entry name" value="q2cbj1_9rhob like domain"/>
    <property type="match status" value="1"/>
</dbReference>
<dbReference type="Gene3D" id="4.10.860.20">
    <property type="entry name" value="Rabenosyn, Rab binding domain"/>
    <property type="match status" value="1"/>
</dbReference>
<dbReference type="HAMAP" id="MF_00657">
    <property type="entry name" value="Hydroxyl_YbiX"/>
    <property type="match status" value="1"/>
</dbReference>
<dbReference type="InterPro" id="IPR005123">
    <property type="entry name" value="Oxoglu/Fe-dep_dioxygenase_dom"/>
</dbReference>
<dbReference type="InterPro" id="IPR041097">
    <property type="entry name" value="PKHD_C"/>
</dbReference>
<dbReference type="InterPro" id="IPR023550">
    <property type="entry name" value="PKHD_hydroxylase"/>
</dbReference>
<dbReference type="InterPro" id="IPR006620">
    <property type="entry name" value="Pro_4_hyd_alph"/>
</dbReference>
<dbReference type="InterPro" id="IPR044862">
    <property type="entry name" value="Pro_4_hyd_alph_FE2OG_OXY"/>
</dbReference>
<dbReference type="NCBIfam" id="NF003974">
    <property type="entry name" value="PRK05467.1-3"/>
    <property type="match status" value="1"/>
</dbReference>
<dbReference type="NCBIfam" id="NF003975">
    <property type="entry name" value="PRK05467.1-4"/>
    <property type="match status" value="1"/>
</dbReference>
<dbReference type="PANTHER" id="PTHR41536">
    <property type="entry name" value="PKHD-TYPE HYDROXYLASE YBIX"/>
    <property type="match status" value="1"/>
</dbReference>
<dbReference type="PANTHER" id="PTHR41536:SF1">
    <property type="entry name" value="PKHD-TYPE HYDROXYLASE YBIX"/>
    <property type="match status" value="1"/>
</dbReference>
<dbReference type="Pfam" id="PF13640">
    <property type="entry name" value="2OG-FeII_Oxy_3"/>
    <property type="match status" value="1"/>
</dbReference>
<dbReference type="Pfam" id="PF18331">
    <property type="entry name" value="PKHD_C"/>
    <property type="match status" value="1"/>
</dbReference>
<dbReference type="SMART" id="SM00702">
    <property type="entry name" value="P4Hc"/>
    <property type="match status" value="1"/>
</dbReference>
<dbReference type="SUPFAM" id="SSF51197">
    <property type="entry name" value="Clavaminate synthase-like"/>
    <property type="match status" value="1"/>
</dbReference>
<dbReference type="PROSITE" id="PS51471">
    <property type="entry name" value="FE2OG_OXY"/>
    <property type="match status" value="1"/>
</dbReference>
<reference key="1">
    <citation type="submission" date="2007-05" db="EMBL/GenBank/DDBJ databases">
        <title>Complete sequence of chromosome of Psychrobacter sp. PRwf-1.</title>
        <authorList>
            <consortium name="US DOE Joint Genome Institute"/>
            <person name="Copeland A."/>
            <person name="Lucas S."/>
            <person name="Lapidus A."/>
            <person name="Barry K."/>
            <person name="Detter J.C."/>
            <person name="Glavina del Rio T."/>
            <person name="Hammon N."/>
            <person name="Israni S."/>
            <person name="Dalin E."/>
            <person name="Tice H."/>
            <person name="Pitluck S."/>
            <person name="Chain P."/>
            <person name="Malfatti S."/>
            <person name="Shin M."/>
            <person name="Vergez L."/>
            <person name="Schmutz J."/>
            <person name="Larimer F."/>
            <person name="Land M."/>
            <person name="Hauser L."/>
            <person name="Kyrpides N."/>
            <person name="Kim E."/>
            <person name="Tiedje J."/>
            <person name="Richardson P."/>
        </authorList>
    </citation>
    <scope>NUCLEOTIDE SEQUENCE [LARGE SCALE GENOMIC DNA]</scope>
    <source>
        <strain>PRwf-1</strain>
    </source>
</reference>
<evidence type="ECO:0000255" key="1">
    <source>
        <dbReference type="HAMAP-Rule" id="MF_00657"/>
    </source>
</evidence>
<accession>A5WFM3</accession>